<protein>
    <recommendedName>
        <fullName evidence="1">Large ribosomal subunit protein bL19</fullName>
    </recommendedName>
    <alternativeName>
        <fullName evidence="2">50S ribosomal protein L19</fullName>
    </alternativeName>
</protein>
<name>RL19_MYCPA</name>
<sequence length="113" mass="12929">MNRLDFVDQASLRDDIPVFGPGDTVNVHVKVIEGAKERIQVFKGVVIRRQGGGVRETFTVRKESYGVGVERTFPVHSPNIDHIQVVTRGDVRRAKLYYLRELRGKKAKIKEKR</sequence>
<gene>
    <name evidence="1" type="primary">rplS</name>
    <name type="ordered locus">MAP_2972c</name>
</gene>
<reference key="1">
    <citation type="journal article" date="2005" name="Proc. Natl. Acad. Sci. U.S.A.">
        <title>The complete genome sequence of Mycobacterium avium subspecies paratuberculosis.</title>
        <authorList>
            <person name="Li L."/>
            <person name="Bannantine J.P."/>
            <person name="Zhang Q."/>
            <person name="Amonsin A."/>
            <person name="May B.J."/>
            <person name="Alt D."/>
            <person name="Banerji N."/>
            <person name="Kanjilal S."/>
            <person name="Kapur V."/>
        </authorList>
    </citation>
    <scope>NUCLEOTIDE SEQUENCE [LARGE SCALE GENOMIC DNA]</scope>
    <source>
        <strain>ATCC BAA-968 / K-10</strain>
    </source>
</reference>
<organism>
    <name type="scientific">Mycolicibacterium paratuberculosis (strain ATCC BAA-968 / K-10)</name>
    <name type="common">Mycobacterium paratuberculosis</name>
    <dbReference type="NCBI Taxonomy" id="262316"/>
    <lineage>
        <taxon>Bacteria</taxon>
        <taxon>Bacillati</taxon>
        <taxon>Actinomycetota</taxon>
        <taxon>Actinomycetes</taxon>
        <taxon>Mycobacteriales</taxon>
        <taxon>Mycobacteriaceae</taxon>
        <taxon>Mycobacterium</taxon>
        <taxon>Mycobacterium avium complex (MAC)</taxon>
    </lineage>
</organism>
<proteinExistence type="inferred from homology"/>
<comment type="function">
    <text evidence="1">This protein is located at the 30S-50S ribosomal subunit interface and may play a role in the structure and function of the aminoacyl-tRNA binding site.</text>
</comment>
<comment type="similarity">
    <text evidence="1">Belongs to the bacterial ribosomal protein bL19 family.</text>
</comment>
<comment type="sequence caution" evidence="2">
    <conflict type="erroneous initiation">
        <sequence resource="EMBL-CDS" id="AAS05289"/>
    </conflict>
</comment>
<accession>Q73VP1</accession>
<feature type="chain" id="PRO_0000163490" description="Large ribosomal subunit protein bL19">
    <location>
        <begin position="1"/>
        <end position="113"/>
    </location>
</feature>
<dbReference type="EMBL" id="AE016958">
    <property type="protein sequence ID" value="AAS05289.1"/>
    <property type="status" value="ALT_INIT"/>
    <property type="molecule type" value="Genomic_DNA"/>
</dbReference>
<dbReference type="RefSeq" id="WP_003875074.1">
    <property type="nucleotide sequence ID" value="NZ_CP106873.1"/>
</dbReference>
<dbReference type="SMR" id="Q73VP1"/>
<dbReference type="STRING" id="262316.MAP_2972c"/>
<dbReference type="GeneID" id="75271152"/>
<dbReference type="KEGG" id="mpa:MAP_2972c"/>
<dbReference type="eggNOG" id="COG0335">
    <property type="taxonomic scope" value="Bacteria"/>
</dbReference>
<dbReference type="HOGENOM" id="CLU_103507_2_1_11"/>
<dbReference type="Proteomes" id="UP000000580">
    <property type="component" value="Chromosome"/>
</dbReference>
<dbReference type="GO" id="GO:0022625">
    <property type="term" value="C:cytosolic large ribosomal subunit"/>
    <property type="evidence" value="ECO:0007669"/>
    <property type="project" value="TreeGrafter"/>
</dbReference>
<dbReference type="GO" id="GO:0003735">
    <property type="term" value="F:structural constituent of ribosome"/>
    <property type="evidence" value="ECO:0007669"/>
    <property type="project" value="InterPro"/>
</dbReference>
<dbReference type="GO" id="GO:0006412">
    <property type="term" value="P:translation"/>
    <property type="evidence" value="ECO:0007669"/>
    <property type="project" value="UniProtKB-UniRule"/>
</dbReference>
<dbReference type="FunFam" id="2.30.30.790:FF:000001">
    <property type="entry name" value="50S ribosomal protein L19"/>
    <property type="match status" value="1"/>
</dbReference>
<dbReference type="Gene3D" id="2.30.30.790">
    <property type="match status" value="1"/>
</dbReference>
<dbReference type="HAMAP" id="MF_00402">
    <property type="entry name" value="Ribosomal_bL19"/>
    <property type="match status" value="1"/>
</dbReference>
<dbReference type="InterPro" id="IPR001857">
    <property type="entry name" value="Ribosomal_bL19"/>
</dbReference>
<dbReference type="InterPro" id="IPR018257">
    <property type="entry name" value="Ribosomal_bL19_CS"/>
</dbReference>
<dbReference type="InterPro" id="IPR038657">
    <property type="entry name" value="Ribosomal_bL19_sf"/>
</dbReference>
<dbReference type="InterPro" id="IPR008991">
    <property type="entry name" value="Translation_prot_SH3-like_sf"/>
</dbReference>
<dbReference type="NCBIfam" id="TIGR01024">
    <property type="entry name" value="rplS_bact"/>
    <property type="match status" value="1"/>
</dbReference>
<dbReference type="PANTHER" id="PTHR15680:SF9">
    <property type="entry name" value="LARGE RIBOSOMAL SUBUNIT PROTEIN BL19M"/>
    <property type="match status" value="1"/>
</dbReference>
<dbReference type="PANTHER" id="PTHR15680">
    <property type="entry name" value="RIBOSOMAL PROTEIN L19"/>
    <property type="match status" value="1"/>
</dbReference>
<dbReference type="Pfam" id="PF01245">
    <property type="entry name" value="Ribosomal_L19"/>
    <property type="match status" value="1"/>
</dbReference>
<dbReference type="PIRSF" id="PIRSF002191">
    <property type="entry name" value="Ribosomal_L19"/>
    <property type="match status" value="1"/>
</dbReference>
<dbReference type="PRINTS" id="PR00061">
    <property type="entry name" value="RIBOSOMALL19"/>
</dbReference>
<dbReference type="SUPFAM" id="SSF50104">
    <property type="entry name" value="Translation proteins SH3-like domain"/>
    <property type="match status" value="1"/>
</dbReference>
<dbReference type="PROSITE" id="PS01015">
    <property type="entry name" value="RIBOSOMAL_L19"/>
    <property type="match status" value="1"/>
</dbReference>
<evidence type="ECO:0000255" key="1">
    <source>
        <dbReference type="HAMAP-Rule" id="MF_00402"/>
    </source>
</evidence>
<evidence type="ECO:0000305" key="2"/>
<keyword id="KW-1185">Reference proteome</keyword>
<keyword id="KW-0687">Ribonucleoprotein</keyword>
<keyword id="KW-0689">Ribosomal protein</keyword>